<comment type="function">
    <text>Arabinosyl transferase responsible for the polymerization of arabinose into the arabinan of arabinogalactan.</text>
</comment>
<comment type="subcellular location">
    <subcellularLocation>
        <location evidence="5">Cell membrane</location>
        <topology evidence="5">Multi-pass membrane protein</topology>
    </subcellularLocation>
</comment>
<comment type="induction">
    <text evidence="3">Positively regulated by the transcriptional regulatory protein EmbR.</text>
</comment>
<comment type="miscellaneous">
    <text>This is one of the targets of the anti-tuberculosis drug ethambutol [(S,S')-2,2'-(ethylenediimino)di-1-butanol; EMB]. EMB is a first-line drug used to treat tuberculosis. EMB inhibits the transfer of arabinogalactan into the cell wall.</text>
</comment>
<comment type="similarity">
    <text evidence="5">Belongs to the emb family.</text>
</comment>
<name>EMBB_MYCTU</name>
<reference key="1">
    <citation type="journal article" date="1997" name="Nat. Med.">
        <title>The emb operon, a gene cluster of Mycobacterium tuberculosis involved in resistance to ethambutol.</title>
        <authorList>
            <person name="Telenti A."/>
            <person name="Philipp W.J."/>
            <person name="Sreevatsan S."/>
            <person name="Bernasconi C."/>
            <person name="Stockbauer K.E."/>
            <person name="Wieles B."/>
            <person name="Musser J.M."/>
            <person name="Jacobs W.R. Jr."/>
        </authorList>
    </citation>
    <scope>NUCLEOTIDE SEQUENCE [GENOMIC DNA]</scope>
    <source>
        <strain>ATCC 25618 / H37Rv</strain>
    </source>
</reference>
<reference key="2">
    <citation type="journal article" date="1998" name="Nature">
        <title>Deciphering the biology of Mycobacterium tuberculosis from the complete genome sequence.</title>
        <authorList>
            <person name="Cole S.T."/>
            <person name="Brosch R."/>
            <person name="Parkhill J."/>
            <person name="Garnier T."/>
            <person name="Churcher C.M."/>
            <person name="Harris D.E."/>
            <person name="Gordon S.V."/>
            <person name="Eiglmeier K."/>
            <person name="Gas S."/>
            <person name="Barry C.E. III"/>
            <person name="Tekaia F."/>
            <person name="Badcock K."/>
            <person name="Basham D."/>
            <person name="Brown D."/>
            <person name="Chillingworth T."/>
            <person name="Connor R."/>
            <person name="Davies R.M."/>
            <person name="Devlin K."/>
            <person name="Feltwell T."/>
            <person name="Gentles S."/>
            <person name="Hamlin N."/>
            <person name="Holroyd S."/>
            <person name="Hornsby T."/>
            <person name="Jagels K."/>
            <person name="Krogh A."/>
            <person name="McLean J."/>
            <person name="Moule S."/>
            <person name="Murphy L.D."/>
            <person name="Oliver S."/>
            <person name="Osborne J."/>
            <person name="Quail M.A."/>
            <person name="Rajandream M.A."/>
            <person name="Rogers J."/>
            <person name="Rutter S."/>
            <person name="Seeger K."/>
            <person name="Skelton S."/>
            <person name="Squares S."/>
            <person name="Squares R."/>
            <person name="Sulston J.E."/>
            <person name="Taylor K."/>
            <person name="Whitehead S."/>
            <person name="Barrell B.G."/>
        </authorList>
    </citation>
    <scope>NUCLEOTIDE SEQUENCE [LARGE SCALE GENOMIC DNA]</scope>
    <source>
        <strain>ATCC 25618 / H37Rv</strain>
    </source>
</reference>
<reference key="3">
    <citation type="journal article" date="2011" name="Mol. Cell. Proteomics">
        <title>Proteogenomic analysis of Mycobacterium tuberculosis by high resolution mass spectrometry.</title>
        <authorList>
            <person name="Kelkar D.S."/>
            <person name="Kumar D."/>
            <person name="Kumar P."/>
            <person name="Balakrishnan L."/>
            <person name="Muthusamy B."/>
            <person name="Yadav A.K."/>
            <person name="Shrivastava P."/>
            <person name="Marimuthu A."/>
            <person name="Anand S."/>
            <person name="Sundaram H."/>
            <person name="Kingsbury R."/>
            <person name="Harsha H.C."/>
            <person name="Nair B."/>
            <person name="Prasad T.S."/>
            <person name="Chauhan D.S."/>
            <person name="Katoch K."/>
            <person name="Katoch V.M."/>
            <person name="Kumar P."/>
            <person name="Chaerkady R."/>
            <person name="Ramachandran S."/>
            <person name="Dash D."/>
            <person name="Pandey A."/>
        </authorList>
    </citation>
    <scope>IDENTIFICATION BY MASS SPECTROMETRY [LARGE SCALE ANALYSIS]</scope>
    <source>
        <strain>ATCC 25618 / H37Rv</strain>
    </source>
</reference>
<reference key="4">
    <citation type="journal article" date="1997" name="Antimicrob. Agents Chemother.">
        <title>Ethambutol resistance in Mycobacterium tuberculosis: critical role of embB mutations.</title>
        <authorList>
            <person name="Sreevatsan S."/>
            <person name="Stockbauer K.E."/>
            <person name="Pan X."/>
            <person name="Kreiswirth B.N."/>
            <person name="Moghazeh S.L."/>
            <person name="Jacobs W.R. Jr."/>
            <person name="Telenti A."/>
            <person name="Musser J.M."/>
        </authorList>
    </citation>
    <scope>VARIANTS EMB RESISTANT LEU-306; ILE-306; VAL-306 AND VAL-330</scope>
</reference>
<reference key="5">
    <citation type="journal article" date="2000" name="Antimicrob. Agents Chemother.">
        <title>Molecular genetic analysis of nucleotide polymorphisms associated with ethambutol resistance in human isolates of Mycobacterium tuberculosis.</title>
        <authorList>
            <person name="Ramaswamy S.V."/>
            <person name="Amin A.G."/>
            <person name="Goeksel S."/>
            <person name="Stager C.E."/>
            <person name="Dou S.-J."/>
            <person name="El Sahly H."/>
            <person name="Moghazeh S.L."/>
            <person name="Kreiswirth B.N."/>
            <person name="Musser J.M."/>
        </authorList>
    </citation>
    <scope>VARIANTS EMB RESISTANT</scope>
</reference>
<reference key="6">
    <citation type="journal article" date="2001" name="Mol. Cell. Probes">
        <title>Detection of embB codon 306 mutations in ethambutol resistant Mycobacterium tuberculosis directly from sputum samples: a low-cost, rapid approach.</title>
        <authorList>
            <person name="Rinder H."/>
            <person name="Mieskes K.T."/>
            <person name="Tortoli E."/>
            <person name="Richter E."/>
            <person name="Casal M."/>
            <person name="Vaquero M."/>
            <person name="Cambau E."/>
            <person name="Feldmann K."/>
            <person name="Loescher T."/>
        </authorList>
    </citation>
    <scope>VARIANTS EMB RESISTANT LEU-306; ILE-306 AND VAL-306</scope>
</reference>
<reference key="7">
    <citation type="journal article" date="2006" name="J. Bacteriol.">
        <title>Transcriptional control of the mycobacterial embCAB operon by PknH through a regulatory protein, EmbR, in vivo.</title>
        <authorList>
            <person name="Sharma K."/>
            <person name="Gupta M."/>
            <person name="Pathak M."/>
            <person name="Gupta N."/>
            <person name="Koul A."/>
            <person name="Sarangi S."/>
            <person name="Baweja R."/>
            <person name="Singh Y."/>
        </authorList>
    </citation>
    <scope>INDUCTION</scope>
</reference>
<feature type="chain" id="PRO_0000220569" description="Probable arabinosyltransferase B">
    <location>
        <begin position="1"/>
        <end position="1098"/>
    </location>
</feature>
<feature type="transmembrane region" description="Helical" evidence="1">
    <location>
        <begin position="28"/>
        <end position="50"/>
    </location>
</feature>
<feature type="transmembrane region" description="Helical" evidence="1">
    <location>
        <begin position="217"/>
        <end position="239"/>
    </location>
</feature>
<feature type="transmembrane region" description="Helical" evidence="1">
    <location>
        <begin position="271"/>
        <end position="293"/>
    </location>
</feature>
<feature type="transmembrane region" description="Helical" evidence="1">
    <location>
        <begin position="402"/>
        <end position="419"/>
    </location>
</feature>
<feature type="transmembrane region" description="Helical" evidence="1">
    <location>
        <begin position="434"/>
        <end position="456"/>
    </location>
</feature>
<feature type="transmembrane region" description="Helical" evidence="1">
    <location>
        <begin position="472"/>
        <end position="494"/>
    </location>
</feature>
<feature type="transmembrane region" description="Helical" evidence="1">
    <location>
        <begin position="541"/>
        <end position="558"/>
    </location>
</feature>
<feature type="transmembrane region" description="Helical" evidence="1">
    <location>
        <begin position="570"/>
        <end position="587"/>
    </location>
</feature>
<feature type="transmembrane region" description="Helical" evidence="1">
    <location>
        <begin position="597"/>
        <end position="619"/>
    </location>
</feature>
<feature type="transmembrane region" description="Helical" evidence="1">
    <location>
        <begin position="626"/>
        <end position="648"/>
    </location>
</feature>
<feature type="transmembrane region" description="Helical" evidence="1">
    <location>
        <begin position="663"/>
        <end position="685"/>
    </location>
</feature>
<feature type="transmembrane region" description="Helical" evidence="1">
    <location>
        <begin position="698"/>
        <end position="720"/>
    </location>
</feature>
<feature type="sequence variant" description="Resistance to EMB.">
    <original>S</original>
    <variation>A</variation>
    <location>
        <position position="297"/>
    </location>
</feature>
<feature type="sequence variant" description="Resistance to EMB." evidence="2 4">
    <original>M</original>
    <variation>I</variation>
    <location>
        <position position="306"/>
    </location>
</feature>
<feature type="sequence variant" description="Resistance to EMB." evidence="2 4">
    <original>M</original>
    <variation>L</variation>
    <location>
        <position position="306"/>
    </location>
</feature>
<feature type="sequence variant" description="Resistance to EMB." evidence="2 4">
    <original>M</original>
    <variation>V</variation>
    <location>
        <position position="306"/>
    </location>
</feature>
<feature type="sequence variant" description="Resistance to EMB.">
    <original>D</original>
    <variation>G</variation>
    <location>
        <position position="328"/>
    </location>
</feature>
<feature type="sequence variant" description="Resistance to EMB.">
    <original>D</original>
    <variation>Y</variation>
    <location>
        <position position="328"/>
    </location>
</feature>
<feature type="sequence variant" description="Resistance to EMB." evidence="4">
    <original>F</original>
    <variation>V</variation>
    <location>
        <position position="330"/>
    </location>
</feature>
<feature type="sequence variant" description="Resistance to EMB.">
    <original>Y</original>
    <variation>H</variation>
    <location>
        <position position="334"/>
    </location>
</feature>
<feature type="sequence variant" description="Resistance to EMB.">
    <original>G</original>
    <variation>A</variation>
    <location>
        <position position="406"/>
    </location>
</feature>
<feature type="sequence variant" description="Resistance to EMB.">
    <original>G</original>
    <variation>C</variation>
    <location>
        <position position="406"/>
    </location>
</feature>
<feature type="sequence variant" description="Resistance to EMB.">
    <original>G</original>
    <variation>D</variation>
    <location>
        <position position="406"/>
    </location>
</feature>
<feature type="sequence variant" description="Resistance to EMB.">
    <original>Q</original>
    <variation>K</variation>
    <location>
        <position position="497"/>
    </location>
</feature>
<feature type="sequence variant" description="Resistance to EMB.">
    <original>Q</original>
    <variation>R</variation>
    <location>
        <position position="497"/>
    </location>
</feature>
<feature type="sequence variant" description="Resistance to EMB.">
    <original>G</original>
    <variation>D</variation>
    <location>
        <position position="745"/>
    </location>
</feature>
<feature type="sequence variant" description="Resistance to EMB.">
    <original>D</original>
    <variation>A</variation>
    <location>
        <position position="959"/>
    </location>
</feature>
<feature type="sequence variant" description="Resistance to EMB.">
    <original>M</original>
    <variation>R</variation>
    <location>
        <position position="1000"/>
    </location>
</feature>
<feature type="sequence variant" description="Resistance to EMB.">
    <original>D</original>
    <variation>N</variation>
    <location>
        <position position="1024"/>
    </location>
</feature>
<feature type="sequence conflict" description="In Ref. 1." evidence="5" ref="1">
    <original>SW</original>
    <variation>FL</variation>
    <location>
        <begin position="773"/>
        <end position="774"/>
    </location>
</feature>
<feature type="helix" evidence="6">
    <location>
        <begin position="25"/>
        <end position="39"/>
    </location>
</feature>
<feature type="helix" evidence="6">
    <location>
        <begin position="44"/>
        <end position="46"/>
    </location>
</feature>
<feature type="strand" evidence="6">
    <location>
        <begin position="49"/>
        <end position="56"/>
    </location>
</feature>
<feature type="strand" evidence="6">
    <location>
        <begin position="60"/>
        <end position="63"/>
    </location>
</feature>
<feature type="strand" evidence="6">
    <location>
        <begin position="77"/>
        <end position="81"/>
    </location>
</feature>
<feature type="helix" evidence="6">
    <location>
        <begin position="85"/>
        <end position="89"/>
    </location>
</feature>
<feature type="strand" evidence="6">
    <location>
        <begin position="98"/>
        <end position="102"/>
    </location>
</feature>
<feature type="strand" evidence="6">
    <location>
        <begin position="122"/>
        <end position="126"/>
    </location>
</feature>
<feature type="strand" evidence="6">
    <location>
        <begin position="128"/>
        <end position="136"/>
    </location>
</feature>
<feature type="helix" evidence="6">
    <location>
        <begin position="137"/>
        <end position="140"/>
    </location>
</feature>
<feature type="strand" evidence="6">
    <location>
        <begin position="141"/>
        <end position="144"/>
    </location>
</feature>
<feature type="strand" evidence="6">
    <location>
        <begin position="161"/>
        <end position="163"/>
    </location>
</feature>
<feature type="strand" evidence="6">
    <location>
        <begin position="167"/>
        <end position="169"/>
    </location>
</feature>
<feature type="strand" evidence="6">
    <location>
        <begin position="202"/>
        <end position="205"/>
    </location>
</feature>
<feature type="strand" evidence="6">
    <location>
        <begin position="212"/>
        <end position="214"/>
    </location>
</feature>
<feature type="helix" evidence="6">
    <location>
        <begin position="216"/>
        <end position="239"/>
    </location>
</feature>
<feature type="helix" evidence="6">
    <location>
        <begin position="278"/>
        <end position="293"/>
    </location>
</feature>
<feature type="helix" evidence="6">
    <location>
        <begin position="300"/>
        <end position="308"/>
    </location>
</feature>
<feature type="turn" evidence="6">
    <location>
        <begin position="309"/>
        <end position="312"/>
    </location>
</feature>
<feature type="strand" evidence="6">
    <location>
        <begin position="313"/>
        <end position="315"/>
    </location>
</feature>
<feature type="strand" evidence="6">
    <location>
        <begin position="320"/>
        <end position="324"/>
    </location>
</feature>
<feature type="helix" evidence="6">
    <location>
        <begin position="334"/>
        <end position="340"/>
    </location>
</feature>
<feature type="turn" evidence="6">
    <location>
        <begin position="341"/>
        <end position="343"/>
    </location>
</feature>
<feature type="helix" evidence="6">
    <location>
        <begin position="347"/>
        <end position="350"/>
    </location>
</feature>
<feature type="helix" evidence="6">
    <location>
        <begin position="353"/>
        <end position="368"/>
    </location>
</feature>
<feature type="helix" evidence="6">
    <location>
        <begin position="370"/>
        <end position="372"/>
    </location>
</feature>
<feature type="turn" evidence="6">
    <location>
        <begin position="375"/>
        <end position="377"/>
    </location>
</feature>
<feature type="helix" evidence="6">
    <location>
        <begin position="381"/>
        <end position="395"/>
    </location>
</feature>
<feature type="strand" evidence="6">
    <location>
        <begin position="396"/>
        <end position="398"/>
    </location>
</feature>
<feature type="strand" evidence="6">
    <location>
        <begin position="401"/>
        <end position="403"/>
    </location>
</feature>
<feature type="helix" evidence="6">
    <location>
        <begin position="405"/>
        <end position="422"/>
    </location>
</feature>
<feature type="turn" evidence="6">
    <location>
        <begin position="423"/>
        <end position="426"/>
    </location>
</feature>
<feature type="helix" evidence="6">
    <location>
        <begin position="430"/>
        <end position="442"/>
    </location>
</feature>
<feature type="helix" evidence="6">
    <location>
        <begin position="446"/>
        <end position="448"/>
    </location>
</feature>
<feature type="helix" evidence="6">
    <location>
        <begin position="452"/>
        <end position="457"/>
    </location>
</feature>
<feature type="helix" evidence="6">
    <location>
        <begin position="460"/>
        <end position="470"/>
    </location>
</feature>
<feature type="helix" evidence="6">
    <location>
        <begin position="476"/>
        <end position="479"/>
    </location>
</feature>
<feature type="helix" evidence="6">
    <location>
        <begin position="481"/>
        <end position="484"/>
    </location>
</feature>
<feature type="turn" evidence="6">
    <location>
        <begin position="485"/>
        <end position="487"/>
    </location>
</feature>
<feature type="helix" evidence="6">
    <location>
        <begin position="490"/>
        <end position="493"/>
    </location>
</feature>
<feature type="strand" evidence="6">
    <location>
        <begin position="495"/>
        <end position="497"/>
    </location>
</feature>
<feature type="helix" evidence="6">
    <location>
        <begin position="499"/>
        <end position="511"/>
    </location>
</feature>
<feature type="helix" evidence="6">
    <location>
        <begin position="518"/>
        <end position="521"/>
    </location>
</feature>
<feature type="helix" evidence="6">
    <location>
        <begin position="522"/>
        <end position="526"/>
    </location>
</feature>
<feature type="helix" evidence="6">
    <location>
        <begin position="527"/>
        <end position="529"/>
    </location>
</feature>
<feature type="strand" evidence="6">
    <location>
        <begin position="530"/>
        <end position="535"/>
    </location>
</feature>
<feature type="helix" evidence="6">
    <location>
        <begin position="537"/>
        <end position="559"/>
    </location>
</feature>
<feature type="helix" evidence="6">
    <location>
        <begin position="570"/>
        <end position="584"/>
    </location>
</feature>
<feature type="helix" evidence="6">
    <location>
        <begin position="593"/>
        <end position="600"/>
    </location>
</feature>
<feature type="helix" evidence="6">
    <location>
        <begin position="603"/>
        <end position="613"/>
    </location>
</feature>
<feature type="turn" evidence="6">
    <location>
        <begin position="616"/>
        <end position="618"/>
    </location>
</feature>
<feature type="helix" evidence="6">
    <location>
        <begin position="622"/>
        <end position="639"/>
    </location>
</feature>
<feature type="turn" evidence="6">
    <location>
        <begin position="648"/>
        <end position="651"/>
    </location>
</feature>
<feature type="strand" evidence="6">
    <location>
        <begin position="657"/>
        <end position="659"/>
    </location>
</feature>
<feature type="helix" evidence="6">
    <location>
        <begin position="663"/>
        <end position="665"/>
    </location>
</feature>
<feature type="helix" evidence="6">
    <location>
        <begin position="668"/>
        <end position="687"/>
    </location>
</feature>
<feature type="helix" evidence="6">
    <location>
        <begin position="697"/>
        <end position="701"/>
    </location>
</feature>
<feature type="helix" evidence="6">
    <location>
        <begin position="706"/>
        <end position="727"/>
    </location>
</feature>
<feature type="helix" evidence="6">
    <location>
        <begin position="735"/>
        <end position="741"/>
    </location>
</feature>
<feature type="helix" evidence="6">
    <location>
        <begin position="748"/>
        <end position="751"/>
    </location>
</feature>
<feature type="strand" evidence="6">
    <location>
        <begin position="753"/>
        <end position="758"/>
    </location>
</feature>
<feature type="strand" evidence="6">
    <location>
        <begin position="771"/>
        <end position="773"/>
    </location>
</feature>
<feature type="turn" evidence="6">
    <location>
        <begin position="779"/>
        <end position="781"/>
    </location>
</feature>
<feature type="strand" evidence="6">
    <location>
        <begin position="795"/>
        <end position="798"/>
    </location>
</feature>
<feature type="helix" evidence="6">
    <location>
        <begin position="813"/>
        <end position="815"/>
    </location>
</feature>
<feature type="strand" evidence="6">
    <location>
        <begin position="826"/>
        <end position="828"/>
    </location>
</feature>
<feature type="turn" evidence="6">
    <location>
        <begin position="839"/>
        <end position="841"/>
    </location>
</feature>
<feature type="strand" evidence="6">
    <location>
        <begin position="850"/>
        <end position="852"/>
    </location>
</feature>
<feature type="strand" evidence="6">
    <location>
        <begin position="874"/>
        <end position="883"/>
    </location>
</feature>
<feature type="strand" evidence="6">
    <location>
        <begin position="888"/>
        <end position="891"/>
    </location>
</feature>
<feature type="strand" evidence="6">
    <location>
        <begin position="901"/>
        <end position="903"/>
    </location>
</feature>
<feature type="strand" evidence="6">
    <location>
        <begin position="926"/>
        <end position="928"/>
    </location>
</feature>
<feature type="strand" evidence="6">
    <location>
        <begin position="932"/>
        <end position="935"/>
    </location>
</feature>
<feature type="turn" evidence="6">
    <location>
        <begin position="936"/>
        <end position="938"/>
    </location>
</feature>
<feature type="strand" evidence="6">
    <location>
        <begin position="945"/>
        <end position="947"/>
    </location>
</feature>
<feature type="strand" evidence="6">
    <location>
        <begin position="961"/>
        <end position="967"/>
    </location>
</feature>
<feature type="helix" evidence="6">
    <location>
        <begin position="974"/>
        <end position="977"/>
    </location>
</feature>
<feature type="strand" evidence="6">
    <location>
        <begin position="980"/>
        <end position="982"/>
    </location>
</feature>
<feature type="strand" evidence="6">
    <location>
        <begin position="984"/>
        <end position="986"/>
    </location>
</feature>
<feature type="turn" evidence="6">
    <location>
        <begin position="991"/>
        <end position="993"/>
    </location>
</feature>
<feature type="strand" evidence="6">
    <location>
        <begin position="1002"/>
        <end position="1007"/>
    </location>
</feature>
<feature type="strand" evidence="6">
    <location>
        <begin position="1011"/>
        <end position="1015"/>
    </location>
</feature>
<feature type="helix" evidence="6">
    <location>
        <begin position="1018"/>
        <end position="1023"/>
    </location>
</feature>
<feature type="helix" evidence="6">
    <location>
        <begin position="1025"/>
        <end position="1028"/>
    </location>
</feature>
<feature type="helix" evidence="6">
    <location>
        <begin position="1031"/>
        <end position="1033"/>
    </location>
</feature>
<feature type="turn" evidence="6">
    <location>
        <begin position="1037"/>
        <end position="1039"/>
    </location>
</feature>
<feature type="helix" evidence="6">
    <location>
        <begin position="1040"/>
        <end position="1043"/>
    </location>
</feature>
<feature type="strand" evidence="6">
    <location>
        <begin position="1046"/>
        <end position="1048"/>
    </location>
</feature>
<feature type="strand" evidence="6">
    <location>
        <begin position="1050"/>
        <end position="1055"/>
    </location>
</feature>
<feature type="strand" evidence="6">
    <location>
        <begin position="1063"/>
        <end position="1067"/>
    </location>
</feature>
<feature type="strand" evidence="6">
    <location>
        <begin position="1080"/>
        <end position="1084"/>
    </location>
</feature>
<keyword id="KW-0002">3D-structure</keyword>
<keyword id="KW-0046">Antibiotic resistance</keyword>
<keyword id="KW-1003">Cell membrane</keyword>
<keyword id="KW-0961">Cell wall biogenesis/degradation</keyword>
<keyword id="KW-0328">Glycosyltransferase</keyword>
<keyword id="KW-0472">Membrane</keyword>
<keyword id="KW-1185">Reference proteome</keyword>
<keyword id="KW-0808">Transferase</keyword>
<keyword id="KW-0812">Transmembrane</keyword>
<keyword id="KW-1133">Transmembrane helix</keyword>
<gene>
    <name type="primary">embB</name>
    <name type="ordered locus">Rv3795</name>
    <name type="ORF">MTCY13D12.29</name>
</gene>
<organism>
    <name type="scientific">Mycobacterium tuberculosis (strain ATCC 25618 / H37Rv)</name>
    <dbReference type="NCBI Taxonomy" id="83332"/>
    <lineage>
        <taxon>Bacteria</taxon>
        <taxon>Bacillati</taxon>
        <taxon>Actinomycetota</taxon>
        <taxon>Actinomycetes</taxon>
        <taxon>Mycobacteriales</taxon>
        <taxon>Mycobacteriaceae</taxon>
        <taxon>Mycobacterium</taxon>
        <taxon>Mycobacterium tuberculosis complex</taxon>
    </lineage>
</organism>
<accession>P9WNL7</accession>
<accession>L0TDT8</accession>
<accession>P72030</accession>
<accession>P72061</accession>
<sequence>MTQCASRRKSTPNRAILGAFASARGTRWVATIAGLIGFVLSVATPLLPVVQTTAMLDWPQRGQLGSVTAPLISLTPVDFTATVPCDVVRAMPPAGGVVLGTAPKQGKDANLQALFVVVSAQRVDVTDRNVVILSVPREQVTSPQCQRIEVTSTHAGTFANFVGLKDPSGAPLRSGFPDPNLRPQIVGVFTDLTGPAPPGLAVSATIDTRFSTRPTTLKLLAIIGAIVATVVALIALWRLDQLDGRGSIAQLLLRPFRPASSPGGMRRLIPASWRTFTLTDAVVIFGFLLWHVIGANSSDDGYILGMARVADHAGYMSNYFRWFGSPEDPFGWYYNLLALMTHVSDASLWMRLPDLAAGLVCWLLLSREVLPRLGPAVEASKPAYWAAAMVLLTAWMPFNNGLRPEGIIALGSLVTYVLIERSMRYSRLTPAALAVVTAAFTLGVQPTGLIAVAALVAGGRPMLRILVRRHRLVGTLPLVSPMLAAGTVILTVVFADQTLSTVLEATRVRAKIGPSQAWYTENLRYYYLILPTVDGSLSRRFGFLITALCLFTAVFIMLRRKRIPSVARGPAWRLMGVIFGTMFFLMFTPTKWVHHFGLFAAVGAAMAALTTVLVSPSVLRWSRNRMAFLAALFFLLALCWATTNGWWYVSSYGVPFNSAMPKIDGITVSTIFFALFAIAAGYAAWLHFAPRGAGEGRLIRALTTAPVPIVAGFMAAVFVASMVAGIVRQYPTYSNGWSNVRAFVGGCGLADDVLVEPDTNAGFMKPLDGDSGSWGPLGPLGGVNPVGFTPNGVPEHTVAEAIVMKPNQPGTDYDWDAPTKLTSPGINGSTVPLPYGLDPARVPLAGTYTTGAQQQSTLVSAWYLLPKPDDGHPLVVVTAAGKIAGNSVLHGYTPGQTVVLEYAMPGPGALVPAGRMVPDDLYGEQPKAWRNLRFARAKMPADAVAVRVVAEDLSLTPEDWIAVTPPRVPDLRSLQEYVGSTQPVLLDWAVGLAFPCQQPMLHANGIAEIPKFRITPDYSAKKLDTDTWEDGTNGGLLGITDLLLRAHVMATYLSRDWARDWGSLRKFDTLVDAPPAQLELGTATRSGLWSPGKIRIGP</sequence>
<dbReference type="EC" id="2.4.2.-"/>
<dbReference type="EMBL" id="U68480">
    <property type="protein sequence ID" value="AAC45281.1"/>
    <property type="molecule type" value="Genomic_DNA"/>
</dbReference>
<dbReference type="EMBL" id="AL123456">
    <property type="protein sequence ID" value="CCP46624.1"/>
    <property type="molecule type" value="Genomic_DNA"/>
</dbReference>
<dbReference type="PIR" id="G70697">
    <property type="entry name" value="G70697"/>
</dbReference>
<dbReference type="RefSeq" id="NP_218312.1">
    <property type="nucleotide sequence ID" value="NC_000962.3"/>
</dbReference>
<dbReference type="RefSeq" id="WP_003901728.1">
    <property type="nucleotide sequence ID" value="NZ_NVQJ01000009.1"/>
</dbReference>
<dbReference type="PDB" id="7BVF">
    <property type="method" value="EM"/>
    <property type="resolution" value="2.97 A"/>
    <property type="chains" value="B=1-1098"/>
</dbReference>
<dbReference type="PDBsum" id="7BVF"/>
<dbReference type="EMDB" id="EMD-30218"/>
<dbReference type="SMR" id="P9WNL7"/>
<dbReference type="FunCoup" id="P9WNL7">
    <property type="interactions" value="13"/>
</dbReference>
<dbReference type="STRING" id="83332.Rv3795"/>
<dbReference type="DrugBank" id="DB00330">
    <property type="generic name" value="Ethambutol"/>
</dbReference>
<dbReference type="CAZy" id="GT53">
    <property type="family name" value="Glycosyltransferase Family 53"/>
</dbReference>
<dbReference type="TCDB" id="9.B.364.1.5">
    <property type="family name" value="the putative arabinosyltransferase b (aratb) family"/>
</dbReference>
<dbReference type="PaxDb" id="83332-Rv3795"/>
<dbReference type="GeneID" id="886126"/>
<dbReference type="KEGG" id="mtu:Rv3795"/>
<dbReference type="KEGG" id="mtv:RVBD_3795"/>
<dbReference type="TubercuList" id="Rv3795"/>
<dbReference type="eggNOG" id="COG1807">
    <property type="taxonomic scope" value="Bacteria"/>
</dbReference>
<dbReference type="InParanoid" id="P9WNL7"/>
<dbReference type="OrthoDB" id="3584570at2"/>
<dbReference type="PhylomeDB" id="P9WNL7"/>
<dbReference type="BioCyc" id="MetaCyc:G185E-8091-MONOMER"/>
<dbReference type="Proteomes" id="UP000001584">
    <property type="component" value="Chromosome"/>
</dbReference>
<dbReference type="GO" id="GO:0009274">
    <property type="term" value="C:peptidoglycan-based cell wall"/>
    <property type="evidence" value="ECO:0007005"/>
    <property type="project" value="MTBBASE"/>
</dbReference>
<dbReference type="GO" id="GO:0005886">
    <property type="term" value="C:plasma membrane"/>
    <property type="evidence" value="ECO:0007005"/>
    <property type="project" value="MTBBASE"/>
</dbReference>
<dbReference type="GO" id="GO:0052636">
    <property type="term" value="F:arabinosyltransferase activity"/>
    <property type="evidence" value="ECO:0007669"/>
    <property type="project" value="InterPro"/>
</dbReference>
<dbReference type="GO" id="GO:0071766">
    <property type="term" value="P:Actinobacterium-type cell wall biogenesis"/>
    <property type="evidence" value="ECO:0007669"/>
    <property type="project" value="InterPro"/>
</dbReference>
<dbReference type="GO" id="GO:0071555">
    <property type="term" value="P:cell wall organization"/>
    <property type="evidence" value="ECO:0007669"/>
    <property type="project" value="UniProtKB-KW"/>
</dbReference>
<dbReference type="GO" id="GO:0046677">
    <property type="term" value="P:response to antibiotic"/>
    <property type="evidence" value="ECO:0007669"/>
    <property type="project" value="UniProtKB-KW"/>
</dbReference>
<dbReference type="FunFam" id="2.60.120.940:FF:000001">
    <property type="entry name" value="Membrane indolylacetylinositol arabinosyltransferase embC"/>
    <property type="match status" value="1"/>
</dbReference>
<dbReference type="FunFam" id="2.60.120.610:FF:000002">
    <property type="entry name" value="Probable arabinosyltransferase B"/>
    <property type="match status" value="1"/>
</dbReference>
<dbReference type="Gene3D" id="3.40.190.160">
    <property type="match status" value="1"/>
</dbReference>
<dbReference type="Gene3D" id="2.60.120.610">
    <property type="entry name" value="arabinofuranosyltransferase like domain"/>
    <property type="match status" value="1"/>
</dbReference>
<dbReference type="Gene3D" id="2.60.120.940">
    <property type="entry name" value="EmbC, C-terminal domain, subdomain 2"/>
    <property type="match status" value="1"/>
</dbReference>
<dbReference type="InterPro" id="IPR032731">
    <property type="entry name" value="Arabino_trans_C"/>
</dbReference>
<dbReference type="InterPro" id="IPR042486">
    <property type="entry name" value="Arabino_trans_C_2"/>
</dbReference>
<dbReference type="InterPro" id="IPR007680">
    <property type="entry name" value="Arabino_trans_central"/>
</dbReference>
<dbReference type="InterPro" id="IPR040920">
    <property type="entry name" value="Arabino_trans_N"/>
</dbReference>
<dbReference type="InterPro" id="IPR027451">
    <property type="entry name" value="EmbABC_dom1"/>
</dbReference>
<dbReference type="Pfam" id="PF14896">
    <property type="entry name" value="Arabino_trans_C"/>
    <property type="match status" value="1"/>
</dbReference>
<dbReference type="Pfam" id="PF17689">
    <property type="entry name" value="Arabino_trans_N"/>
    <property type="match status" value="1"/>
</dbReference>
<dbReference type="Pfam" id="PF04602">
    <property type="entry name" value="Arabinose_trans"/>
    <property type="match status" value="1"/>
</dbReference>
<evidence type="ECO:0000255" key="1"/>
<evidence type="ECO:0000269" key="2">
    <source>
    </source>
</evidence>
<evidence type="ECO:0000269" key="3">
    <source>
    </source>
</evidence>
<evidence type="ECO:0000269" key="4">
    <source>
    </source>
</evidence>
<evidence type="ECO:0000305" key="5"/>
<evidence type="ECO:0007829" key="6">
    <source>
        <dbReference type="PDB" id="7BVF"/>
    </source>
</evidence>
<protein>
    <recommendedName>
        <fullName>Probable arabinosyltransferase B</fullName>
        <ecNumber>2.4.2.-</ecNumber>
    </recommendedName>
</protein>
<proteinExistence type="evidence at protein level"/>